<organism>
    <name type="scientific">Escherichia coli (strain K12)</name>
    <dbReference type="NCBI Taxonomy" id="83333"/>
    <lineage>
        <taxon>Bacteria</taxon>
        <taxon>Pseudomonadati</taxon>
        <taxon>Pseudomonadota</taxon>
        <taxon>Gammaproteobacteria</taxon>
        <taxon>Enterobacterales</taxon>
        <taxon>Enterobacteriaceae</taxon>
        <taxon>Escherichia</taxon>
    </lineage>
</organism>
<gene>
    <name evidence="9" type="primary">baeS</name>
    <name type="ordered locus">b2078</name>
    <name type="ordered locus">JW2063</name>
</gene>
<name>BAES_ECOLI</name>
<dbReference type="EC" id="2.7.13.3"/>
<dbReference type="EMBL" id="D14054">
    <property type="protein sequence ID" value="BAA03140.1"/>
    <property type="molecule type" value="Genomic_DNA"/>
</dbReference>
<dbReference type="EMBL" id="U00096">
    <property type="protein sequence ID" value="AAC75139.1"/>
    <property type="molecule type" value="Genomic_DNA"/>
</dbReference>
<dbReference type="EMBL" id="AP009048">
    <property type="protein sequence ID" value="BAA15934.1"/>
    <property type="molecule type" value="Genomic_DNA"/>
</dbReference>
<dbReference type="PIR" id="E64974">
    <property type="entry name" value="E64974"/>
</dbReference>
<dbReference type="RefSeq" id="NP_416582.1">
    <property type="nucleotide sequence ID" value="NC_000913.3"/>
</dbReference>
<dbReference type="RefSeq" id="WP_000675150.1">
    <property type="nucleotide sequence ID" value="NZ_SSZK01000011.1"/>
</dbReference>
<dbReference type="SMR" id="P30847"/>
<dbReference type="BioGRID" id="4260426">
    <property type="interactions" value="51"/>
</dbReference>
<dbReference type="DIP" id="DIP-9199N"/>
<dbReference type="FunCoup" id="P30847">
    <property type="interactions" value="485"/>
</dbReference>
<dbReference type="IntAct" id="P30847">
    <property type="interactions" value="3"/>
</dbReference>
<dbReference type="STRING" id="511145.b2078"/>
<dbReference type="jPOST" id="P30847"/>
<dbReference type="PaxDb" id="511145-b2078"/>
<dbReference type="EnsemblBacteria" id="AAC75139">
    <property type="protein sequence ID" value="AAC75139"/>
    <property type="gene ID" value="b2078"/>
</dbReference>
<dbReference type="GeneID" id="75205982"/>
<dbReference type="GeneID" id="946611"/>
<dbReference type="KEGG" id="ecj:JW2063"/>
<dbReference type="KEGG" id="eco:b2078"/>
<dbReference type="KEGG" id="ecoc:C3026_11685"/>
<dbReference type="PATRIC" id="fig|1411691.4.peg.172"/>
<dbReference type="EchoBASE" id="EB1574"/>
<dbReference type="eggNOG" id="COG2205">
    <property type="taxonomic scope" value="Bacteria"/>
</dbReference>
<dbReference type="HOGENOM" id="CLU_000445_89_6_6"/>
<dbReference type="InParanoid" id="P30847"/>
<dbReference type="OMA" id="RRFEVWP"/>
<dbReference type="OrthoDB" id="9804645at2"/>
<dbReference type="PhylomeDB" id="P30847"/>
<dbReference type="BioCyc" id="EcoCyc:BAES-MONOMER"/>
<dbReference type="BioCyc" id="MetaCyc:BAES-MONOMER"/>
<dbReference type="BRENDA" id="2.7.13.3">
    <property type="organism ID" value="2026"/>
</dbReference>
<dbReference type="PRO" id="PR:P30847"/>
<dbReference type="Proteomes" id="UP000000625">
    <property type="component" value="Chromosome"/>
</dbReference>
<dbReference type="GO" id="GO:0016020">
    <property type="term" value="C:membrane"/>
    <property type="evidence" value="ECO:0000314"/>
    <property type="project" value="EcoCyc"/>
</dbReference>
<dbReference type="GO" id="GO:0005886">
    <property type="term" value="C:plasma membrane"/>
    <property type="evidence" value="ECO:0000314"/>
    <property type="project" value="EcoCyc"/>
</dbReference>
<dbReference type="GO" id="GO:0005524">
    <property type="term" value="F:ATP binding"/>
    <property type="evidence" value="ECO:0007669"/>
    <property type="project" value="UniProtKB-KW"/>
</dbReference>
<dbReference type="GO" id="GO:0000155">
    <property type="term" value="F:phosphorelay sensor kinase activity"/>
    <property type="evidence" value="ECO:0000314"/>
    <property type="project" value="EcoCyc"/>
</dbReference>
<dbReference type="GO" id="GO:0036460">
    <property type="term" value="P:cellular response to cell envelope stress"/>
    <property type="evidence" value="ECO:0000314"/>
    <property type="project" value="EcoCyc"/>
</dbReference>
<dbReference type="GO" id="GO:0007165">
    <property type="term" value="P:signal transduction"/>
    <property type="evidence" value="ECO:0000314"/>
    <property type="project" value="EcoCyc"/>
</dbReference>
<dbReference type="CDD" id="cd06225">
    <property type="entry name" value="HAMP"/>
    <property type="match status" value="1"/>
</dbReference>
<dbReference type="CDD" id="cd16946">
    <property type="entry name" value="HATPase_BaeS-like"/>
    <property type="match status" value="1"/>
</dbReference>
<dbReference type="CDD" id="cd00082">
    <property type="entry name" value="HisKA"/>
    <property type="match status" value="1"/>
</dbReference>
<dbReference type="FunFam" id="3.30.565.10:FF:000006">
    <property type="entry name" value="Sensor histidine kinase WalK"/>
    <property type="match status" value="1"/>
</dbReference>
<dbReference type="FunFam" id="1.10.287.130:FF:000014">
    <property type="entry name" value="Signal transduction histidine-protein kinase BaeS"/>
    <property type="match status" value="1"/>
</dbReference>
<dbReference type="Gene3D" id="1.10.287.130">
    <property type="match status" value="1"/>
</dbReference>
<dbReference type="Gene3D" id="6.10.340.10">
    <property type="match status" value="1"/>
</dbReference>
<dbReference type="Gene3D" id="3.30.565.10">
    <property type="entry name" value="Histidine kinase-like ATPase, C-terminal domain"/>
    <property type="match status" value="1"/>
</dbReference>
<dbReference type="InterPro" id="IPR050351">
    <property type="entry name" value="2-comp_sensor_kinase"/>
</dbReference>
<dbReference type="InterPro" id="IPR003660">
    <property type="entry name" value="HAMP_dom"/>
</dbReference>
<dbReference type="InterPro" id="IPR036890">
    <property type="entry name" value="HATPase_C_sf"/>
</dbReference>
<dbReference type="InterPro" id="IPR005467">
    <property type="entry name" value="His_kinase_dom"/>
</dbReference>
<dbReference type="InterPro" id="IPR003661">
    <property type="entry name" value="HisK_dim/P_dom"/>
</dbReference>
<dbReference type="InterPro" id="IPR036097">
    <property type="entry name" value="HisK_dim/P_sf"/>
</dbReference>
<dbReference type="InterPro" id="IPR004358">
    <property type="entry name" value="Sig_transdc_His_kin-like_C"/>
</dbReference>
<dbReference type="NCBIfam" id="NF012163">
    <property type="entry name" value="BaeS_SmeS"/>
    <property type="match status" value="1"/>
</dbReference>
<dbReference type="NCBIfam" id="NF007837">
    <property type="entry name" value="PRK10549.1"/>
    <property type="match status" value="1"/>
</dbReference>
<dbReference type="PANTHER" id="PTHR45453">
    <property type="entry name" value="PHOSPHATE REGULON SENSOR PROTEIN PHOR"/>
    <property type="match status" value="1"/>
</dbReference>
<dbReference type="PANTHER" id="PTHR45453:SF1">
    <property type="entry name" value="PHOSPHATE REGULON SENSOR PROTEIN PHOR"/>
    <property type="match status" value="1"/>
</dbReference>
<dbReference type="Pfam" id="PF00672">
    <property type="entry name" value="HAMP"/>
    <property type="match status" value="1"/>
</dbReference>
<dbReference type="Pfam" id="PF02518">
    <property type="entry name" value="HATPase_c"/>
    <property type="match status" value="1"/>
</dbReference>
<dbReference type="Pfam" id="PF00512">
    <property type="entry name" value="HisKA"/>
    <property type="match status" value="1"/>
</dbReference>
<dbReference type="PRINTS" id="PR00344">
    <property type="entry name" value="BCTRLSENSOR"/>
</dbReference>
<dbReference type="SMART" id="SM00304">
    <property type="entry name" value="HAMP"/>
    <property type="match status" value="1"/>
</dbReference>
<dbReference type="SMART" id="SM00387">
    <property type="entry name" value="HATPase_c"/>
    <property type="match status" value="1"/>
</dbReference>
<dbReference type="SMART" id="SM00388">
    <property type="entry name" value="HisKA"/>
    <property type="match status" value="1"/>
</dbReference>
<dbReference type="SUPFAM" id="SSF55874">
    <property type="entry name" value="ATPase domain of HSP90 chaperone/DNA topoisomerase II/histidine kinase"/>
    <property type="match status" value="1"/>
</dbReference>
<dbReference type="SUPFAM" id="SSF158472">
    <property type="entry name" value="HAMP domain-like"/>
    <property type="match status" value="1"/>
</dbReference>
<dbReference type="SUPFAM" id="SSF47384">
    <property type="entry name" value="Homodimeric domain of signal transducing histidine kinase"/>
    <property type="match status" value="1"/>
</dbReference>
<dbReference type="PROSITE" id="PS50885">
    <property type="entry name" value="HAMP"/>
    <property type="match status" value="1"/>
</dbReference>
<dbReference type="PROSITE" id="PS50109">
    <property type="entry name" value="HIS_KIN"/>
    <property type="match status" value="1"/>
</dbReference>
<evidence type="ECO:0000255" key="1"/>
<evidence type="ECO:0000255" key="2">
    <source>
        <dbReference type="PROSITE-ProRule" id="PRU00102"/>
    </source>
</evidence>
<evidence type="ECO:0000255" key="3">
    <source>
        <dbReference type="PROSITE-ProRule" id="PRU00107"/>
    </source>
</evidence>
<evidence type="ECO:0000269" key="4">
    <source>
    </source>
</evidence>
<evidence type="ECO:0000269" key="5">
    <source>
    </source>
</evidence>
<evidence type="ECO:0000269" key="6">
    <source>
    </source>
</evidence>
<evidence type="ECO:0000269" key="7">
    <source>
    </source>
</evidence>
<evidence type="ECO:0000269" key="8">
    <source>
    </source>
</evidence>
<evidence type="ECO:0000303" key="9">
    <source>
    </source>
</evidence>
<evidence type="ECO:0000305" key="10"/>
<protein>
    <recommendedName>
        <fullName>Signal transduction histidine-protein kinase BaeS</fullName>
        <ecNumber>2.7.13.3</ecNumber>
    </recommendedName>
</protein>
<keyword id="KW-0067">ATP-binding</keyword>
<keyword id="KW-0997">Cell inner membrane</keyword>
<keyword id="KW-1003">Cell membrane</keyword>
<keyword id="KW-0418">Kinase</keyword>
<keyword id="KW-0472">Membrane</keyword>
<keyword id="KW-0547">Nucleotide-binding</keyword>
<keyword id="KW-0597">Phosphoprotein</keyword>
<keyword id="KW-1185">Reference proteome</keyword>
<keyword id="KW-0346">Stress response</keyword>
<keyword id="KW-0808">Transferase</keyword>
<keyword id="KW-0812">Transmembrane</keyword>
<keyword id="KW-1133">Transmembrane helix</keyword>
<keyword id="KW-0902">Two-component regulatory system</keyword>
<sequence length="467" mass="51991">MKFWRPGITGKLFLAIFATCIVLLISMHWAVRISFERGFIDYIKHGNEQRLQLLSDALGEQYAQHGNWRFLRNNDRFVFQILRSFEHDNSEDKPGPGMPPHGWRTQFWVVDQNNKVLVGPRAPIPPDGTRRPILVNGAEVGAVIASPVERLTRNTDINFDKQQRQTSWLIVALATLLAALATFLLARGLLAPVKRLVDGTHKLAAGDFTTRVTPTSEDELGKLAQDFNQLASTLEKNQQMRRDFMADISHELRTPLAVLRGELEAIQDGVRKFTPETVASLQAEVGTLTKLVDDLHQLSMSDEGALAYQKAPVDLIPLLEVAGGAFRERFASRGLKLQFSLPDSITVFGDRDRLMQLFNNLLENSLRYTDSGGSLQISAGQRDKTVRLTFADSAPGVSDDQLQKLFERFYRTEGSRNRASGGSGLGLAICLNIVEAHNGRIIAAHSPFGGVSITVELPLERDLQREV</sequence>
<proteinExistence type="evidence at protein level"/>
<reference key="1">
    <citation type="journal article" date="1993" name="J. Biochem.">
        <title>Novel members of the two-component signal transduction genes in Escherichia coli.</title>
        <authorList>
            <person name="Nagasawa S."/>
            <person name="Ishige K."/>
            <person name="Mizuno T."/>
        </authorList>
    </citation>
    <scope>NUCLEOTIDE SEQUENCE [GENOMIC DNA]</scope>
    <source>
        <strain>K12</strain>
    </source>
</reference>
<reference key="2">
    <citation type="journal article" date="1996" name="DNA Res.">
        <title>A 460-kb DNA sequence of the Escherichia coli K-12 genome corresponding to the 40.1-50.0 min region on the linkage map.</title>
        <authorList>
            <person name="Itoh T."/>
            <person name="Aiba H."/>
            <person name="Baba T."/>
            <person name="Fujita K."/>
            <person name="Hayashi K."/>
            <person name="Inada T."/>
            <person name="Isono K."/>
            <person name="Kasai H."/>
            <person name="Kimura S."/>
            <person name="Kitakawa M."/>
            <person name="Kitagawa M."/>
            <person name="Makino K."/>
            <person name="Miki T."/>
            <person name="Mizobuchi K."/>
            <person name="Mori H."/>
            <person name="Mori T."/>
            <person name="Motomura K."/>
            <person name="Nakade S."/>
            <person name="Nakamura Y."/>
            <person name="Nashimoto H."/>
            <person name="Nishio Y."/>
            <person name="Oshima T."/>
            <person name="Saito N."/>
            <person name="Sampei G."/>
            <person name="Seki Y."/>
            <person name="Sivasundaram S."/>
            <person name="Tagami H."/>
            <person name="Takeda J."/>
            <person name="Takemoto K."/>
            <person name="Wada C."/>
            <person name="Yamamoto Y."/>
            <person name="Horiuchi T."/>
        </authorList>
    </citation>
    <scope>NUCLEOTIDE SEQUENCE [LARGE SCALE GENOMIC DNA]</scope>
    <source>
        <strain>K12 / W3110 / ATCC 27325 / DSM 5911</strain>
    </source>
</reference>
<reference key="3">
    <citation type="journal article" date="1997" name="Science">
        <title>The complete genome sequence of Escherichia coli K-12.</title>
        <authorList>
            <person name="Blattner F.R."/>
            <person name="Plunkett G. III"/>
            <person name="Bloch C.A."/>
            <person name="Perna N.T."/>
            <person name="Burland V."/>
            <person name="Riley M."/>
            <person name="Collado-Vides J."/>
            <person name="Glasner J.D."/>
            <person name="Rode C.K."/>
            <person name="Mayhew G.F."/>
            <person name="Gregor J."/>
            <person name="Davis N.W."/>
            <person name="Kirkpatrick H.A."/>
            <person name="Goeden M.A."/>
            <person name="Rose D.J."/>
            <person name="Mau B."/>
            <person name="Shao Y."/>
        </authorList>
    </citation>
    <scope>NUCLEOTIDE SEQUENCE [LARGE SCALE GENOMIC DNA]</scope>
    <source>
        <strain>K12 / MG1655 / ATCC 47076</strain>
    </source>
</reference>
<reference key="4">
    <citation type="journal article" date="2006" name="Mol. Syst. Biol.">
        <title>Highly accurate genome sequences of Escherichia coli K-12 strains MG1655 and W3110.</title>
        <authorList>
            <person name="Hayashi K."/>
            <person name="Morooka N."/>
            <person name="Yamamoto Y."/>
            <person name="Fujita K."/>
            <person name="Isono K."/>
            <person name="Choi S."/>
            <person name="Ohtsubo E."/>
            <person name="Baba T."/>
            <person name="Wanner B.L."/>
            <person name="Mori H."/>
            <person name="Horiuchi T."/>
        </authorList>
    </citation>
    <scope>NUCLEOTIDE SEQUENCE [LARGE SCALE GENOMIC DNA]</scope>
    <source>
        <strain>K12 / W3110 / ATCC 27325 / DSM 5911</strain>
    </source>
</reference>
<reference key="5">
    <citation type="journal article" date="2002" name="J. Bacteriol.">
        <title>The baeSR two-component regulatory system activates transcription of the yegMNOB (mdtABCD) transporter gene cluster in Escherichia coli and increases its resistance to novobiocin and deoxycholate.</title>
        <authorList>
            <person name="Baranova N."/>
            <person name="Nikaido H."/>
        </authorList>
    </citation>
    <scope>FUNCTION IN REGULATION OF THE MDTABCD OPERON</scope>
    <source>
        <strain>K12</strain>
    </source>
</reference>
<reference key="6">
    <citation type="journal article" date="2002" name="Mol. Microbiol.">
        <title>A third envelope stress signal transduction pathway in Escherichia coli.</title>
        <authorList>
            <person name="Raffa R.G."/>
            <person name="Raivio T.L."/>
        </authorList>
    </citation>
    <scope>FUNCTION IN ENVELOPE STRESS RESPONSE</scope>
    <source>
        <strain>K12 / MC4100</strain>
    </source>
</reference>
<reference key="7">
    <citation type="journal article" date="2005" name="J. Biol. Chem.">
        <title>Functional characterization in vitro of all two-component signal transduction systems from Escherichia coli.</title>
        <authorList>
            <person name="Yamamoto K."/>
            <person name="Hirao K."/>
            <person name="Oshima T."/>
            <person name="Aiba H."/>
            <person name="Utsumi R."/>
            <person name="Ishihama A."/>
        </authorList>
    </citation>
    <scope>FUNCTION</scope>
    <scope>AUTOPHOSPHORYLATION</scope>
    <source>
        <strain>K12 / W3110 / ATCC 27325 / DSM 5911</strain>
    </source>
</reference>
<reference key="8">
    <citation type="journal article" date="2005" name="Science">
        <title>Global topology analysis of the Escherichia coli inner membrane proteome.</title>
        <authorList>
            <person name="Daley D.O."/>
            <person name="Rapp M."/>
            <person name="Granseth E."/>
            <person name="Melen K."/>
            <person name="Drew D."/>
            <person name="von Heijne G."/>
        </authorList>
    </citation>
    <scope>SUBCELLULAR LOCATION</scope>
    <source>
        <strain>K12 / MG1655 / ATCC 47076</strain>
    </source>
</reference>
<reference key="9">
    <citation type="journal article" date="2011" name="Mol. Microbiol.">
        <title>Envelope stress is a trigger of CRISPR RNA-mediated DNA silencing in Escherichia coli.</title>
        <authorList>
            <person name="Perez-Rodriguez R."/>
            <person name="Haitjema C."/>
            <person name="Huang Q."/>
            <person name="Nam K.H."/>
            <person name="Bernardis S."/>
            <person name="Ke A."/>
            <person name="DeLisa M.P."/>
        </authorList>
    </citation>
    <scope>REGULATION OF THE CASABCDE-YGBT-YGBF OPERON</scope>
    <scope>DISRUPTION PHENOTYPE</scope>
    <source>
        <strain>K12 / BW25113</strain>
    </source>
</reference>
<reference key="10">
    <citation type="journal article" date="2011" name="Nat. Struct. Mol. Biol.">
        <title>Genetic selection designed to stabilize proteins uncovers a chaperone called Spy.</title>
        <authorList>
            <person name="Quan S."/>
            <person name="Koldewey P."/>
            <person name="Tapley T."/>
            <person name="Kirsch N."/>
            <person name="Ruane K.M."/>
            <person name="Pfizenmaier J."/>
            <person name="Shi R."/>
            <person name="Hofmann S."/>
            <person name="Foit L."/>
            <person name="Ren G."/>
            <person name="Jakob U."/>
            <person name="Xu Z."/>
            <person name="Cygler M."/>
            <person name="Bardwell J.C."/>
        </authorList>
    </citation>
    <scope>FUNCTION</scope>
    <scope>MUTAGENESIS OF ARG-150; PRO-192; GLU-264; ASP-268 AND ARG-416</scope>
    <source>
        <strain>K12 / MG1655 / ATCC 47076</strain>
    </source>
</reference>
<feature type="chain" id="PRO_0000074696" description="Signal transduction histidine-protein kinase BaeS">
    <location>
        <begin position="1"/>
        <end position="467"/>
    </location>
</feature>
<feature type="topological domain" description="Cytoplasmic" evidence="1">
    <location>
        <begin position="1"/>
        <end position="11"/>
    </location>
</feature>
<feature type="transmembrane region" description="Helical" evidence="1">
    <location>
        <begin position="12"/>
        <end position="32"/>
    </location>
</feature>
<feature type="topological domain" description="Periplasmic" evidence="1">
    <location>
        <begin position="33"/>
        <end position="167"/>
    </location>
</feature>
<feature type="transmembrane region" description="Helical" evidence="1">
    <location>
        <begin position="168"/>
        <end position="186"/>
    </location>
</feature>
<feature type="topological domain" description="Cytoplasmic" evidence="1">
    <location>
        <begin position="187"/>
        <end position="467"/>
    </location>
</feature>
<feature type="domain" description="HAMP" evidence="2">
    <location>
        <begin position="187"/>
        <end position="239"/>
    </location>
</feature>
<feature type="domain" description="Histidine kinase" evidence="3">
    <location>
        <begin position="247"/>
        <end position="461"/>
    </location>
</feature>
<feature type="modified residue" description="Phosphohistidine; by autocatalysis" evidence="3">
    <location>
        <position position="250"/>
    </location>
</feature>
<feature type="mutagenesis site" description="Increased expression of periplasmic chaperone Spy." evidence="8">
    <original>R</original>
    <variation>W</variation>
    <location>
        <position position="150"/>
    </location>
</feature>
<feature type="mutagenesis site" description="Increased expression of periplasmic chaperone Spy." evidence="8">
    <original>P</original>
    <variation>L</variation>
    <location>
        <position position="192"/>
    </location>
</feature>
<feature type="mutagenesis site" description="Increased expression of periplasmic chaperone Spy." evidence="8">
    <original>E</original>
    <variation>K</variation>
    <location>
        <position position="264"/>
    </location>
</feature>
<feature type="mutagenesis site" description="Increased expression of periplasmic chaperone Spy." evidence="8">
    <original>D</original>
    <variation>N</variation>
    <location>
        <position position="268"/>
    </location>
</feature>
<feature type="mutagenesis site" description="Increased expression of periplasmic chaperone Spy, increased mRNA for mdtA and acrD, target genes of the BaeSR envelope stress response." evidence="8">
    <original>R</original>
    <variation>C</variation>
    <location>
        <position position="416"/>
    </location>
</feature>
<feature type="sequence conflict" description="In Ref. 1; BAA03140." evidence="10" ref="1">
    <original>GSRNRASG</original>
    <variation>VPATVPA</variation>
    <location>
        <begin position="414"/>
        <end position="421"/>
    </location>
</feature>
<accession>P30847</accession>
<accession>P76401</accession>
<comment type="function">
    <text evidence="4 5 7 8">Member of the two-component regulatory system BaeS/BaeR which responds to envelope stress (PubMed:12354228, PubMed:21317898). Activates expression of periplasmic chaperone spy in response to spheroplast formation, indole and P pili protein PapG overexpression (PubMed:12354228). Activates BaeR by phosphorylation which then activates the mdtABCD (PubMed:12107134) and probably the CRISPR-Cas casABCDE-ygbT-ygbF operons (PubMed:21255106).</text>
</comment>
<comment type="catalytic activity">
    <reaction>
        <text>ATP + protein L-histidine = ADP + protein N-phospho-L-histidine.</text>
        <dbReference type="EC" id="2.7.13.3"/>
    </reaction>
</comment>
<comment type="subcellular location">
    <subcellularLocation>
        <location evidence="6">Cell inner membrane</location>
        <topology evidence="6">Multi-pass membrane protein</topology>
    </subcellularLocation>
</comment>
<comment type="PTM">
    <text evidence="5">Autophosphorylated.</text>
</comment>
<comment type="disruption phenotype">
    <text evidence="7">Loss of induction of the CRISPR-Cas casABCDE-ygbT-ygbF operon (PubMed:21255106).</text>
</comment>